<keyword id="KW-0276">Fatty acid metabolism</keyword>
<keyword id="KW-0413">Isomerase</keyword>
<keyword id="KW-0442">Lipid degradation</keyword>
<keyword id="KW-0443">Lipid metabolism</keyword>
<keyword id="KW-0456">Lyase</keyword>
<keyword id="KW-0511">Multifunctional enzyme</keyword>
<keyword id="KW-0520">NAD</keyword>
<keyword id="KW-0560">Oxidoreductase</keyword>
<feature type="chain" id="PRO_1000088079" description="Fatty acid oxidation complex subunit alpha">
    <location>
        <begin position="1"/>
        <end position="729"/>
    </location>
</feature>
<feature type="region of interest" description="Enoyl-CoA hydratase/isomerase" evidence="1">
    <location>
        <begin position="1"/>
        <end position="189"/>
    </location>
</feature>
<feature type="region of interest" description="3-hydroxyacyl-CoA dehydrogenase" evidence="1">
    <location>
        <begin position="311"/>
        <end position="729"/>
    </location>
</feature>
<feature type="region of interest" description="Disordered" evidence="2">
    <location>
        <begin position="708"/>
        <end position="729"/>
    </location>
</feature>
<feature type="active site" description="For 3-hydroxyacyl-CoA dehydrogenase activity" evidence="1">
    <location>
        <position position="450"/>
    </location>
</feature>
<feature type="binding site" evidence="1">
    <location>
        <position position="296"/>
    </location>
    <ligand>
        <name>substrate</name>
    </ligand>
</feature>
<feature type="binding site" evidence="1">
    <location>
        <position position="324"/>
    </location>
    <ligand>
        <name>NAD(+)</name>
        <dbReference type="ChEBI" id="CHEBI:57540"/>
    </ligand>
</feature>
<feature type="binding site" evidence="1">
    <location>
        <position position="343"/>
    </location>
    <ligand>
        <name>NAD(+)</name>
        <dbReference type="ChEBI" id="CHEBI:57540"/>
    </ligand>
</feature>
<feature type="binding site" evidence="1">
    <location>
        <begin position="400"/>
        <end position="402"/>
    </location>
    <ligand>
        <name>NAD(+)</name>
        <dbReference type="ChEBI" id="CHEBI:57540"/>
    </ligand>
</feature>
<feature type="binding site" evidence="1">
    <location>
        <position position="407"/>
    </location>
    <ligand>
        <name>NAD(+)</name>
        <dbReference type="ChEBI" id="CHEBI:57540"/>
    </ligand>
</feature>
<feature type="binding site" evidence="1">
    <location>
        <position position="429"/>
    </location>
    <ligand>
        <name>NAD(+)</name>
        <dbReference type="ChEBI" id="CHEBI:57540"/>
    </ligand>
</feature>
<feature type="binding site" evidence="1">
    <location>
        <position position="453"/>
    </location>
    <ligand>
        <name>NAD(+)</name>
        <dbReference type="ChEBI" id="CHEBI:57540"/>
    </ligand>
</feature>
<feature type="binding site" evidence="1">
    <location>
        <position position="500"/>
    </location>
    <ligand>
        <name>substrate</name>
    </ligand>
</feature>
<feature type="binding site" evidence="1">
    <location>
        <position position="660"/>
    </location>
    <ligand>
        <name>substrate</name>
    </ligand>
</feature>
<feature type="site" description="Important for catalytic activity" evidence="1">
    <location>
        <position position="119"/>
    </location>
</feature>
<feature type="site" description="Important for catalytic activity" evidence="1">
    <location>
        <position position="139"/>
    </location>
</feature>
<name>FADB_ECOLC</name>
<comment type="function">
    <text evidence="1">Involved in the aerobic and anaerobic degradation of long-chain fatty acids via beta-oxidation cycle. Catalyzes the formation of 3-oxoacyl-CoA from enoyl-CoA via L-3-hydroxyacyl-CoA. It can also use D-3-hydroxyacyl-CoA and cis-3-enoyl-CoA as substrate.</text>
</comment>
<comment type="catalytic activity">
    <reaction evidence="1">
        <text>a (3S)-3-hydroxyacyl-CoA + NAD(+) = a 3-oxoacyl-CoA + NADH + H(+)</text>
        <dbReference type="Rhea" id="RHEA:22432"/>
        <dbReference type="ChEBI" id="CHEBI:15378"/>
        <dbReference type="ChEBI" id="CHEBI:57318"/>
        <dbReference type="ChEBI" id="CHEBI:57540"/>
        <dbReference type="ChEBI" id="CHEBI:57945"/>
        <dbReference type="ChEBI" id="CHEBI:90726"/>
        <dbReference type="EC" id="1.1.1.35"/>
    </reaction>
</comment>
<comment type="catalytic activity">
    <reaction evidence="1">
        <text>a (3S)-3-hydroxyacyl-CoA = a (2E)-enoyl-CoA + H2O</text>
        <dbReference type="Rhea" id="RHEA:16105"/>
        <dbReference type="ChEBI" id="CHEBI:15377"/>
        <dbReference type="ChEBI" id="CHEBI:57318"/>
        <dbReference type="ChEBI" id="CHEBI:58856"/>
        <dbReference type="EC" id="4.2.1.17"/>
    </reaction>
</comment>
<comment type="catalytic activity">
    <reaction evidence="1">
        <text>a 4-saturated-(3S)-3-hydroxyacyl-CoA = a (3E)-enoyl-CoA + H2O</text>
        <dbReference type="Rhea" id="RHEA:20724"/>
        <dbReference type="ChEBI" id="CHEBI:15377"/>
        <dbReference type="ChEBI" id="CHEBI:58521"/>
        <dbReference type="ChEBI" id="CHEBI:137480"/>
        <dbReference type="EC" id="4.2.1.17"/>
    </reaction>
</comment>
<comment type="catalytic activity">
    <reaction evidence="1">
        <text>(3S)-3-hydroxybutanoyl-CoA = (3R)-3-hydroxybutanoyl-CoA</text>
        <dbReference type="Rhea" id="RHEA:21760"/>
        <dbReference type="ChEBI" id="CHEBI:57315"/>
        <dbReference type="ChEBI" id="CHEBI:57316"/>
        <dbReference type="EC" id="5.1.2.3"/>
    </reaction>
</comment>
<comment type="catalytic activity">
    <reaction evidence="1">
        <text>a (3Z)-enoyl-CoA = a 4-saturated (2E)-enoyl-CoA</text>
        <dbReference type="Rhea" id="RHEA:45900"/>
        <dbReference type="ChEBI" id="CHEBI:85097"/>
        <dbReference type="ChEBI" id="CHEBI:85489"/>
        <dbReference type="EC" id="5.3.3.8"/>
    </reaction>
</comment>
<comment type="catalytic activity">
    <reaction evidence="1">
        <text>a (3E)-enoyl-CoA = a 4-saturated (2E)-enoyl-CoA</text>
        <dbReference type="Rhea" id="RHEA:45228"/>
        <dbReference type="ChEBI" id="CHEBI:58521"/>
        <dbReference type="ChEBI" id="CHEBI:85097"/>
        <dbReference type="EC" id="5.3.3.8"/>
    </reaction>
</comment>
<comment type="pathway">
    <text evidence="1">Lipid metabolism; fatty acid beta-oxidation.</text>
</comment>
<comment type="subunit">
    <text evidence="1">Heterotetramer of two alpha chains (FadB) and two beta chains (FadA).</text>
</comment>
<comment type="similarity">
    <text evidence="1">In the N-terminal section; belongs to the enoyl-CoA hydratase/isomerase family.</text>
</comment>
<comment type="similarity">
    <text evidence="1">In the C-terminal section; belongs to the 3-hydroxyacyl-CoA dehydrogenase family.</text>
</comment>
<protein>
    <recommendedName>
        <fullName evidence="1">Fatty acid oxidation complex subunit alpha</fullName>
    </recommendedName>
    <domain>
        <recommendedName>
            <fullName evidence="1">Enoyl-CoA hydratase/Delta(3)-cis-Delta(2)-trans-enoyl-CoA isomerase/3-hydroxybutyryl-CoA epimerase</fullName>
            <ecNumber evidence="1">4.2.1.17</ecNumber>
            <ecNumber evidence="1">5.1.2.3</ecNumber>
            <ecNumber evidence="1">5.3.3.8</ecNumber>
        </recommendedName>
    </domain>
    <domain>
        <recommendedName>
            <fullName evidence="1">3-hydroxyacyl-CoA dehydrogenase</fullName>
            <ecNumber evidence="1">1.1.1.35</ecNumber>
        </recommendedName>
    </domain>
</protein>
<evidence type="ECO:0000255" key="1">
    <source>
        <dbReference type="HAMAP-Rule" id="MF_01621"/>
    </source>
</evidence>
<evidence type="ECO:0000256" key="2">
    <source>
        <dbReference type="SAM" id="MobiDB-lite"/>
    </source>
</evidence>
<organism>
    <name type="scientific">Escherichia coli (strain ATCC 8739 / DSM 1576 / NBRC 3972 / NCIMB 8545 / WDCM 00012 / Crooks)</name>
    <dbReference type="NCBI Taxonomy" id="481805"/>
    <lineage>
        <taxon>Bacteria</taxon>
        <taxon>Pseudomonadati</taxon>
        <taxon>Pseudomonadota</taxon>
        <taxon>Gammaproteobacteria</taxon>
        <taxon>Enterobacterales</taxon>
        <taxon>Enterobacteriaceae</taxon>
        <taxon>Escherichia</taxon>
    </lineage>
</organism>
<sequence length="729" mass="79549">MLYKGDTLYLDWLEDGIAELVFDAPGSVNKLDTATVASLGEAIGVLEQQSDLKGLLLRSNKAAFIVGADITEFLSLFLVPEEQLSQWLHFANSVFNRLEDLPVPTIAAVNGYALGGGCECVLATDYRLATPDLRIGLPETKLGIMPGFGGSVRMPRMLGADSALEIIAAGKDVGADQALKIGLVDGVVKAEKLVEGAKAVLRQAINGDLDWKAKRQPKLEPLKLSKIEATMSFTIAKGMVAQTAGKHYPAPITAVKTIEAAARFGREEALNLENKSFVPLAHTNEARALVGIFLNDQYVKGKAKKLTKDVETPKQAAVLGAGIMGGGIAYQSAWKGVPVVMKDINDKSLTLGMTEAAKLLNKQLERGKIDGLKLAGVISTIHPTLDYAGFDRVDVVVEAVVENPKVKKAVLAETEQKVRPDTVLASNTSTIPISELANALERPENFCGMHFFNPVHRMPLVEIIRGEKSSDETIAKVVAWASKMGKTPIVVNDCPGFFVNRVLFPYFAGFSQLLRDGADFRKIDKVMEKQFGWPMGPAYLLDVVGIDTAHHAQAVMAAGFPQRMQKDYRDAIDALFDANRFGQKNGLGFWRYKEDSKGKPKKEEDAAVEDLLAEVSQPKRDFSEEEIIARMMIPMVNEVVRCLEEGIIATPAEADMALVYGLGFPPFHGGAFRWLDTLGSAKYLDMAQQYQHLGPLYEVPEGLRNKARHNEPYYPPVEPARPVGDLKTA</sequence>
<accession>B1IW61</accession>
<reference key="1">
    <citation type="submission" date="2008-02" db="EMBL/GenBank/DDBJ databases">
        <title>Complete sequence of Escherichia coli C str. ATCC 8739.</title>
        <authorList>
            <person name="Copeland A."/>
            <person name="Lucas S."/>
            <person name="Lapidus A."/>
            <person name="Glavina del Rio T."/>
            <person name="Dalin E."/>
            <person name="Tice H."/>
            <person name="Bruce D."/>
            <person name="Goodwin L."/>
            <person name="Pitluck S."/>
            <person name="Kiss H."/>
            <person name="Brettin T."/>
            <person name="Detter J.C."/>
            <person name="Han C."/>
            <person name="Kuske C.R."/>
            <person name="Schmutz J."/>
            <person name="Larimer F."/>
            <person name="Land M."/>
            <person name="Hauser L."/>
            <person name="Kyrpides N."/>
            <person name="Mikhailova N."/>
            <person name="Ingram L."/>
            <person name="Richardson P."/>
        </authorList>
    </citation>
    <scope>NUCLEOTIDE SEQUENCE [LARGE SCALE GENOMIC DNA]</scope>
    <source>
        <strain>ATCC 8739 / DSM 1576 / NBRC 3972 / NCIMB 8545 / WDCM 00012 / Crooks</strain>
    </source>
</reference>
<gene>
    <name evidence="1" type="primary">fadB</name>
    <name type="ordered locus">EcolC_4164</name>
</gene>
<proteinExistence type="inferred from homology"/>
<dbReference type="EC" id="4.2.1.17" evidence="1"/>
<dbReference type="EC" id="5.1.2.3" evidence="1"/>
<dbReference type="EC" id="5.3.3.8" evidence="1"/>
<dbReference type="EC" id="1.1.1.35" evidence="1"/>
<dbReference type="EMBL" id="CP000946">
    <property type="protein sequence ID" value="ACA79761.1"/>
    <property type="molecule type" value="Genomic_DNA"/>
</dbReference>
<dbReference type="RefSeq" id="WP_000965943.1">
    <property type="nucleotide sequence ID" value="NZ_MTFT01000015.1"/>
</dbReference>
<dbReference type="SMR" id="B1IW61"/>
<dbReference type="KEGG" id="ecl:EcolC_4164"/>
<dbReference type="HOGENOM" id="CLU_009834_16_3_6"/>
<dbReference type="UniPathway" id="UPA00659"/>
<dbReference type="GO" id="GO:0036125">
    <property type="term" value="C:fatty acid beta-oxidation multienzyme complex"/>
    <property type="evidence" value="ECO:0007669"/>
    <property type="project" value="InterPro"/>
</dbReference>
<dbReference type="GO" id="GO:0008692">
    <property type="term" value="F:3-hydroxybutyryl-CoA epimerase activity"/>
    <property type="evidence" value="ECO:0007669"/>
    <property type="project" value="UniProtKB-UniRule"/>
</dbReference>
<dbReference type="GO" id="GO:0004165">
    <property type="term" value="F:delta(3)-delta(2)-enoyl-CoA isomerase activity"/>
    <property type="evidence" value="ECO:0007669"/>
    <property type="project" value="UniProtKB-UniRule"/>
</dbReference>
<dbReference type="GO" id="GO:0004300">
    <property type="term" value="F:enoyl-CoA hydratase activity"/>
    <property type="evidence" value="ECO:0007669"/>
    <property type="project" value="UniProtKB-UniRule"/>
</dbReference>
<dbReference type="GO" id="GO:0016509">
    <property type="term" value="F:long-chain-3-hydroxyacyl-CoA dehydrogenase activity"/>
    <property type="evidence" value="ECO:0007669"/>
    <property type="project" value="TreeGrafter"/>
</dbReference>
<dbReference type="GO" id="GO:0070403">
    <property type="term" value="F:NAD+ binding"/>
    <property type="evidence" value="ECO:0007669"/>
    <property type="project" value="InterPro"/>
</dbReference>
<dbReference type="GO" id="GO:0006635">
    <property type="term" value="P:fatty acid beta-oxidation"/>
    <property type="evidence" value="ECO:0007669"/>
    <property type="project" value="UniProtKB-UniRule"/>
</dbReference>
<dbReference type="CDD" id="cd06558">
    <property type="entry name" value="crotonase-like"/>
    <property type="match status" value="1"/>
</dbReference>
<dbReference type="FunFam" id="1.10.1040.50:FF:000001">
    <property type="entry name" value="Fatty acid oxidation complex subunit alpha"/>
    <property type="match status" value="1"/>
</dbReference>
<dbReference type="FunFam" id="3.90.226.10:FF:000018">
    <property type="entry name" value="Fatty acid oxidation complex subunit alpha"/>
    <property type="match status" value="1"/>
</dbReference>
<dbReference type="FunFam" id="3.40.50.720:FF:000009">
    <property type="entry name" value="Fatty oxidation complex, alpha subunit"/>
    <property type="match status" value="1"/>
</dbReference>
<dbReference type="Gene3D" id="1.10.1040.50">
    <property type="match status" value="1"/>
</dbReference>
<dbReference type="Gene3D" id="3.90.226.10">
    <property type="entry name" value="2-enoyl-CoA Hydratase, Chain A, domain 1"/>
    <property type="match status" value="1"/>
</dbReference>
<dbReference type="Gene3D" id="3.40.50.720">
    <property type="entry name" value="NAD(P)-binding Rossmann-like Domain"/>
    <property type="match status" value="1"/>
</dbReference>
<dbReference type="HAMAP" id="MF_01621">
    <property type="entry name" value="FadB"/>
    <property type="match status" value="1"/>
</dbReference>
<dbReference type="InterPro" id="IPR006180">
    <property type="entry name" value="3-OHacyl-CoA_DH_CS"/>
</dbReference>
<dbReference type="InterPro" id="IPR006176">
    <property type="entry name" value="3-OHacyl-CoA_DH_NAD-bd"/>
</dbReference>
<dbReference type="InterPro" id="IPR006108">
    <property type="entry name" value="3HC_DH_C"/>
</dbReference>
<dbReference type="InterPro" id="IPR008927">
    <property type="entry name" value="6-PGluconate_DH-like_C_sf"/>
</dbReference>
<dbReference type="InterPro" id="IPR029045">
    <property type="entry name" value="ClpP/crotonase-like_dom_sf"/>
</dbReference>
<dbReference type="InterPro" id="IPR018376">
    <property type="entry name" value="Enoyl-CoA_hyd/isom_CS"/>
</dbReference>
<dbReference type="InterPro" id="IPR001753">
    <property type="entry name" value="Enoyl-CoA_hydra/iso"/>
</dbReference>
<dbReference type="InterPro" id="IPR050136">
    <property type="entry name" value="FA_oxidation_alpha_subunit"/>
</dbReference>
<dbReference type="InterPro" id="IPR012799">
    <property type="entry name" value="FadB"/>
</dbReference>
<dbReference type="InterPro" id="IPR036291">
    <property type="entry name" value="NAD(P)-bd_dom_sf"/>
</dbReference>
<dbReference type="NCBIfam" id="TIGR02437">
    <property type="entry name" value="FadB"/>
    <property type="match status" value="1"/>
</dbReference>
<dbReference type="NCBIfam" id="NF008727">
    <property type="entry name" value="PRK11730.1"/>
    <property type="match status" value="1"/>
</dbReference>
<dbReference type="PANTHER" id="PTHR43612">
    <property type="entry name" value="TRIFUNCTIONAL ENZYME SUBUNIT ALPHA"/>
    <property type="match status" value="1"/>
</dbReference>
<dbReference type="PANTHER" id="PTHR43612:SF3">
    <property type="entry name" value="TRIFUNCTIONAL ENZYME SUBUNIT ALPHA, MITOCHONDRIAL"/>
    <property type="match status" value="1"/>
</dbReference>
<dbReference type="Pfam" id="PF00725">
    <property type="entry name" value="3HCDH"/>
    <property type="match status" value="2"/>
</dbReference>
<dbReference type="Pfam" id="PF02737">
    <property type="entry name" value="3HCDH_N"/>
    <property type="match status" value="1"/>
</dbReference>
<dbReference type="Pfam" id="PF00378">
    <property type="entry name" value="ECH_1"/>
    <property type="match status" value="1"/>
</dbReference>
<dbReference type="SUPFAM" id="SSF48179">
    <property type="entry name" value="6-phosphogluconate dehydrogenase C-terminal domain-like"/>
    <property type="match status" value="2"/>
</dbReference>
<dbReference type="SUPFAM" id="SSF52096">
    <property type="entry name" value="ClpP/crotonase"/>
    <property type="match status" value="1"/>
</dbReference>
<dbReference type="SUPFAM" id="SSF51735">
    <property type="entry name" value="NAD(P)-binding Rossmann-fold domains"/>
    <property type="match status" value="1"/>
</dbReference>
<dbReference type="PROSITE" id="PS00067">
    <property type="entry name" value="3HCDH"/>
    <property type="match status" value="1"/>
</dbReference>
<dbReference type="PROSITE" id="PS00166">
    <property type="entry name" value="ENOYL_COA_HYDRATASE"/>
    <property type="match status" value="1"/>
</dbReference>